<dbReference type="EC" id="4.98.1.1" evidence="1"/>
<dbReference type="EMBL" id="CP001074">
    <property type="protein sequence ID" value="ACE92748.1"/>
    <property type="molecule type" value="Genomic_DNA"/>
</dbReference>
<dbReference type="SMR" id="B3PZU8"/>
<dbReference type="KEGG" id="rec:RHECIAT_CH0003810"/>
<dbReference type="eggNOG" id="COG0276">
    <property type="taxonomic scope" value="Bacteria"/>
</dbReference>
<dbReference type="HOGENOM" id="CLU_018884_0_0_5"/>
<dbReference type="UniPathway" id="UPA00252">
    <property type="reaction ID" value="UER00325"/>
</dbReference>
<dbReference type="Proteomes" id="UP000008817">
    <property type="component" value="Chromosome"/>
</dbReference>
<dbReference type="GO" id="GO:0005737">
    <property type="term" value="C:cytoplasm"/>
    <property type="evidence" value="ECO:0007669"/>
    <property type="project" value="UniProtKB-SubCell"/>
</dbReference>
<dbReference type="GO" id="GO:0004325">
    <property type="term" value="F:ferrochelatase activity"/>
    <property type="evidence" value="ECO:0007669"/>
    <property type="project" value="UniProtKB-UniRule"/>
</dbReference>
<dbReference type="GO" id="GO:0046872">
    <property type="term" value="F:metal ion binding"/>
    <property type="evidence" value="ECO:0007669"/>
    <property type="project" value="UniProtKB-KW"/>
</dbReference>
<dbReference type="GO" id="GO:0006783">
    <property type="term" value="P:heme biosynthetic process"/>
    <property type="evidence" value="ECO:0007669"/>
    <property type="project" value="UniProtKB-UniRule"/>
</dbReference>
<dbReference type="CDD" id="cd00419">
    <property type="entry name" value="Ferrochelatase_C"/>
    <property type="match status" value="1"/>
</dbReference>
<dbReference type="CDD" id="cd03411">
    <property type="entry name" value="Ferrochelatase_N"/>
    <property type="match status" value="1"/>
</dbReference>
<dbReference type="FunFam" id="3.40.50.1400:FF:000002">
    <property type="entry name" value="Ferrochelatase"/>
    <property type="match status" value="1"/>
</dbReference>
<dbReference type="Gene3D" id="3.40.50.1400">
    <property type="match status" value="2"/>
</dbReference>
<dbReference type="HAMAP" id="MF_00323">
    <property type="entry name" value="Ferrochelatase"/>
    <property type="match status" value="1"/>
</dbReference>
<dbReference type="InterPro" id="IPR001015">
    <property type="entry name" value="Ferrochelatase"/>
</dbReference>
<dbReference type="InterPro" id="IPR019772">
    <property type="entry name" value="Ferrochelatase_AS"/>
</dbReference>
<dbReference type="InterPro" id="IPR033644">
    <property type="entry name" value="Ferrochelatase_C"/>
</dbReference>
<dbReference type="InterPro" id="IPR033659">
    <property type="entry name" value="Ferrochelatase_N"/>
</dbReference>
<dbReference type="NCBIfam" id="TIGR00109">
    <property type="entry name" value="hemH"/>
    <property type="match status" value="1"/>
</dbReference>
<dbReference type="PANTHER" id="PTHR11108">
    <property type="entry name" value="FERROCHELATASE"/>
    <property type="match status" value="1"/>
</dbReference>
<dbReference type="PANTHER" id="PTHR11108:SF1">
    <property type="entry name" value="FERROCHELATASE, MITOCHONDRIAL"/>
    <property type="match status" value="1"/>
</dbReference>
<dbReference type="Pfam" id="PF00762">
    <property type="entry name" value="Ferrochelatase"/>
    <property type="match status" value="1"/>
</dbReference>
<dbReference type="SUPFAM" id="SSF53800">
    <property type="entry name" value="Chelatase"/>
    <property type="match status" value="1"/>
</dbReference>
<dbReference type="PROSITE" id="PS00534">
    <property type="entry name" value="FERROCHELATASE"/>
    <property type="match status" value="1"/>
</dbReference>
<organism>
    <name type="scientific">Rhizobium etli (strain CIAT 652)</name>
    <dbReference type="NCBI Taxonomy" id="491916"/>
    <lineage>
        <taxon>Bacteria</taxon>
        <taxon>Pseudomonadati</taxon>
        <taxon>Pseudomonadota</taxon>
        <taxon>Alphaproteobacteria</taxon>
        <taxon>Hyphomicrobiales</taxon>
        <taxon>Rhizobiaceae</taxon>
        <taxon>Rhizobium/Agrobacterium group</taxon>
        <taxon>Rhizobium</taxon>
    </lineage>
</organism>
<comment type="function">
    <text evidence="1">Catalyzes the ferrous insertion into protoporphyrin IX.</text>
</comment>
<comment type="catalytic activity">
    <reaction evidence="1">
        <text>heme b + 2 H(+) = protoporphyrin IX + Fe(2+)</text>
        <dbReference type="Rhea" id="RHEA:22584"/>
        <dbReference type="ChEBI" id="CHEBI:15378"/>
        <dbReference type="ChEBI" id="CHEBI:29033"/>
        <dbReference type="ChEBI" id="CHEBI:57306"/>
        <dbReference type="ChEBI" id="CHEBI:60344"/>
        <dbReference type="EC" id="4.98.1.1"/>
    </reaction>
</comment>
<comment type="pathway">
    <text evidence="1">Porphyrin-containing compound metabolism; protoheme biosynthesis; protoheme from protoporphyrin-IX: step 1/1.</text>
</comment>
<comment type="subcellular location">
    <subcellularLocation>
        <location evidence="1">Cytoplasm</location>
    </subcellularLocation>
</comment>
<comment type="similarity">
    <text evidence="1">Belongs to the ferrochelatase family.</text>
</comment>
<gene>
    <name evidence="1" type="primary">hemH</name>
    <name type="ordered locus">RHECIAT_CH0003810</name>
</gene>
<accession>B3PZU8</accession>
<name>HEMH_RHIE6</name>
<evidence type="ECO:0000255" key="1">
    <source>
        <dbReference type="HAMAP-Rule" id="MF_00323"/>
    </source>
</evidence>
<protein>
    <recommendedName>
        <fullName evidence="1">Ferrochelatase</fullName>
        <ecNumber evidence="1">4.98.1.1</ecNumber>
    </recommendedName>
    <alternativeName>
        <fullName evidence="1">Heme synthase</fullName>
    </alternativeName>
    <alternativeName>
        <fullName evidence="1">Protoheme ferro-lyase</fullName>
    </alternativeName>
</protein>
<proteinExistence type="inferred from homology"/>
<keyword id="KW-0963">Cytoplasm</keyword>
<keyword id="KW-0350">Heme biosynthesis</keyword>
<keyword id="KW-0408">Iron</keyword>
<keyword id="KW-0456">Lyase</keyword>
<keyword id="KW-0479">Metal-binding</keyword>
<keyword id="KW-0627">Porphyrin biosynthesis</keyword>
<feature type="chain" id="PRO_1000116070" description="Ferrochelatase">
    <location>
        <begin position="1"/>
        <end position="344"/>
    </location>
</feature>
<feature type="binding site" evidence="1">
    <location>
        <position position="214"/>
    </location>
    <ligand>
        <name>Fe cation</name>
        <dbReference type="ChEBI" id="CHEBI:24875"/>
    </ligand>
</feature>
<feature type="binding site" evidence="1">
    <location>
        <position position="295"/>
    </location>
    <ligand>
        <name>Fe cation</name>
        <dbReference type="ChEBI" id="CHEBI:24875"/>
    </ligand>
</feature>
<reference key="1">
    <citation type="journal article" date="2010" name="Appl. Environ. Microbiol.">
        <title>Conserved symbiotic plasmid DNA sequences in the multireplicon pangenomic structure of Rhizobium etli.</title>
        <authorList>
            <person name="Gonzalez V."/>
            <person name="Acosta J.L."/>
            <person name="Santamaria R.I."/>
            <person name="Bustos P."/>
            <person name="Fernandez J.L."/>
            <person name="Hernandez Gonzalez I.L."/>
            <person name="Diaz R."/>
            <person name="Flores M."/>
            <person name="Palacios R."/>
            <person name="Mora J."/>
            <person name="Davila G."/>
        </authorList>
    </citation>
    <scope>NUCLEOTIDE SEQUENCE [LARGE SCALE GENOMIC DNA]</scope>
    <source>
        <strain>CIAT 652</strain>
    </source>
</reference>
<sequence length="344" mass="39831">MTADISLRPADHPAVKSGKVGVLLVNLGTPDGTDYTSMRRYLREFLTDRRVIEWSRWKWYPILFGIVLNRRPQKVGRAYELIWNKEKNESFLRTYTRNQSELMAERLKDLDNVKVDWAMRYGTPSIASRIEALKQEGCDRIVLFPLYPQYAAATTATVNDKAFHKLLSMRWQPALRTVPDYHDDETYIDALAQSVEKHLSSLDWKPDMLIASFHGIPMSYFKQGDPYYCQCQKTGRLLRERLGLTQENFMVTFQSRFGPEEWLQPYTDKTVEKLARDGVKRIAVINPGFVSDCLETLEEIAEQAAHSFHENGGEKFAHIPCLNDSEDGMKVLEKVVRRELQGWV</sequence>